<reference key="1">
    <citation type="journal article" date="1997" name="Development">
        <title>Drosophila tissue polarity requires the cell-autonomous activity of the fuzzy gene, which encodes a novel transmembrane protein.</title>
        <authorList>
            <person name="Collier S."/>
            <person name="Gubb D."/>
        </authorList>
    </citation>
    <scope>NUCLEOTIDE SEQUENCE [MRNA]</scope>
    <scope>FUNCTION</scope>
    <scope>TISSUE SPECIFICITY</scope>
    <scope>DEVELOPMENTAL STAGE</scope>
</reference>
<reference key="2">
    <citation type="journal article" date="2000" name="Genetics">
        <title>The Drosophila embargoed gene is required for larval progression and encodes the functional homolog of Schizosaccharomyces Crm1.</title>
        <authorList>
            <person name="Collier S."/>
            <person name="Chan H.Y.E."/>
            <person name="Toda T."/>
            <person name="McKimmie C."/>
            <person name="Johnson G."/>
            <person name="Adler P.N."/>
            <person name="O'Kane C."/>
            <person name="Ashburner M."/>
        </authorList>
    </citation>
    <scope>NUCLEOTIDE SEQUENCE [GENOMIC DNA]</scope>
</reference>
<reference key="3">
    <citation type="journal article" date="2000" name="Science">
        <title>The genome sequence of Drosophila melanogaster.</title>
        <authorList>
            <person name="Adams M.D."/>
            <person name="Celniker S.E."/>
            <person name="Holt R.A."/>
            <person name="Evans C.A."/>
            <person name="Gocayne J.D."/>
            <person name="Amanatides P.G."/>
            <person name="Scherer S.E."/>
            <person name="Li P.W."/>
            <person name="Hoskins R.A."/>
            <person name="Galle R.F."/>
            <person name="George R.A."/>
            <person name="Lewis S.E."/>
            <person name="Richards S."/>
            <person name="Ashburner M."/>
            <person name="Henderson S.N."/>
            <person name="Sutton G.G."/>
            <person name="Wortman J.R."/>
            <person name="Yandell M.D."/>
            <person name="Zhang Q."/>
            <person name="Chen L.X."/>
            <person name="Brandon R.C."/>
            <person name="Rogers Y.-H.C."/>
            <person name="Blazej R.G."/>
            <person name="Champe M."/>
            <person name="Pfeiffer B.D."/>
            <person name="Wan K.H."/>
            <person name="Doyle C."/>
            <person name="Baxter E.G."/>
            <person name="Helt G."/>
            <person name="Nelson C.R."/>
            <person name="Miklos G.L.G."/>
            <person name="Abril J.F."/>
            <person name="Agbayani A."/>
            <person name="An H.-J."/>
            <person name="Andrews-Pfannkoch C."/>
            <person name="Baldwin D."/>
            <person name="Ballew R.M."/>
            <person name="Basu A."/>
            <person name="Baxendale J."/>
            <person name="Bayraktaroglu L."/>
            <person name="Beasley E.M."/>
            <person name="Beeson K.Y."/>
            <person name="Benos P.V."/>
            <person name="Berman B.P."/>
            <person name="Bhandari D."/>
            <person name="Bolshakov S."/>
            <person name="Borkova D."/>
            <person name="Botchan M.R."/>
            <person name="Bouck J."/>
            <person name="Brokstein P."/>
            <person name="Brottier P."/>
            <person name="Burtis K.C."/>
            <person name="Busam D.A."/>
            <person name="Butler H."/>
            <person name="Cadieu E."/>
            <person name="Center A."/>
            <person name="Chandra I."/>
            <person name="Cherry J.M."/>
            <person name="Cawley S."/>
            <person name="Dahlke C."/>
            <person name="Davenport L.B."/>
            <person name="Davies P."/>
            <person name="de Pablos B."/>
            <person name="Delcher A."/>
            <person name="Deng Z."/>
            <person name="Mays A.D."/>
            <person name="Dew I."/>
            <person name="Dietz S.M."/>
            <person name="Dodson K."/>
            <person name="Doup L.E."/>
            <person name="Downes M."/>
            <person name="Dugan-Rocha S."/>
            <person name="Dunkov B.C."/>
            <person name="Dunn P."/>
            <person name="Durbin K.J."/>
            <person name="Evangelista C.C."/>
            <person name="Ferraz C."/>
            <person name="Ferriera S."/>
            <person name="Fleischmann W."/>
            <person name="Fosler C."/>
            <person name="Gabrielian A.E."/>
            <person name="Garg N.S."/>
            <person name="Gelbart W.M."/>
            <person name="Glasser K."/>
            <person name="Glodek A."/>
            <person name="Gong F."/>
            <person name="Gorrell J.H."/>
            <person name="Gu Z."/>
            <person name="Guan P."/>
            <person name="Harris M."/>
            <person name="Harris N.L."/>
            <person name="Harvey D.A."/>
            <person name="Heiman T.J."/>
            <person name="Hernandez J.R."/>
            <person name="Houck J."/>
            <person name="Hostin D."/>
            <person name="Houston K.A."/>
            <person name="Howland T.J."/>
            <person name="Wei M.-H."/>
            <person name="Ibegwam C."/>
            <person name="Jalali M."/>
            <person name="Kalush F."/>
            <person name="Karpen G.H."/>
            <person name="Ke Z."/>
            <person name="Kennison J.A."/>
            <person name="Ketchum K.A."/>
            <person name="Kimmel B.E."/>
            <person name="Kodira C.D."/>
            <person name="Kraft C.L."/>
            <person name="Kravitz S."/>
            <person name="Kulp D."/>
            <person name="Lai Z."/>
            <person name="Lasko P."/>
            <person name="Lei Y."/>
            <person name="Levitsky A.A."/>
            <person name="Li J.H."/>
            <person name="Li Z."/>
            <person name="Liang Y."/>
            <person name="Lin X."/>
            <person name="Liu X."/>
            <person name="Mattei B."/>
            <person name="McIntosh T.C."/>
            <person name="McLeod M.P."/>
            <person name="McPherson D."/>
            <person name="Merkulov G."/>
            <person name="Milshina N.V."/>
            <person name="Mobarry C."/>
            <person name="Morris J."/>
            <person name="Moshrefi A."/>
            <person name="Mount S.M."/>
            <person name="Moy M."/>
            <person name="Murphy B."/>
            <person name="Murphy L."/>
            <person name="Muzny D.M."/>
            <person name="Nelson D.L."/>
            <person name="Nelson D.R."/>
            <person name="Nelson K.A."/>
            <person name="Nixon K."/>
            <person name="Nusskern D.R."/>
            <person name="Pacleb J.M."/>
            <person name="Palazzolo M."/>
            <person name="Pittman G.S."/>
            <person name="Pan S."/>
            <person name="Pollard J."/>
            <person name="Puri V."/>
            <person name="Reese M.G."/>
            <person name="Reinert K."/>
            <person name="Remington K."/>
            <person name="Saunders R.D.C."/>
            <person name="Scheeler F."/>
            <person name="Shen H."/>
            <person name="Shue B.C."/>
            <person name="Siden-Kiamos I."/>
            <person name="Simpson M."/>
            <person name="Skupski M.P."/>
            <person name="Smith T.J."/>
            <person name="Spier E."/>
            <person name="Spradling A.C."/>
            <person name="Stapleton M."/>
            <person name="Strong R."/>
            <person name="Sun E."/>
            <person name="Svirskas R."/>
            <person name="Tector C."/>
            <person name="Turner R."/>
            <person name="Venter E."/>
            <person name="Wang A.H."/>
            <person name="Wang X."/>
            <person name="Wang Z.-Y."/>
            <person name="Wassarman D.A."/>
            <person name="Weinstock G.M."/>
            <person name="Weissenbach J."/>
            <person name="Williams S.M."/>
            <person name="Woodage T."/>
            <person name="Worley K.C."/>
            <person name="Wu D."/>
            <person name="Yang S."/>
            <person name="Yao Q.A."/>
            <person name="Ye J."/>
            <person name="Yeh R.-F."/>
            <person name="Zaveri J.S."/>
            <person name="Zhan M."/>
            <person name="Zhang G."/>
            <person name="Zhao Q."/>
            <person name="Zheng L."/>
            <person name="Zheng X.H."/>
            <person name="Zhong F.N."/>
            <person name="Zhong W."/>
            <person name="Zhou X."/>
            <person name="Zhu S.C."/>
            <person name="Zhu X."/>
            <person name="Smith H.O."/>
            <person name="Gibbs R.A."/>
            <person name="Myers E.W."/>
            <person name="Rubin G.M."/>
            <person name="Venter J.C."/>
        </authorList>
    </citation>
    <scope>NUCLEOTIDE SEQUENCE [LARGE SCALE GENOMIC DNA]</scope>
    <source>
        <strain>Berkeley</strain>
    </source>
</reference>
<reference key="4">
    <citation type="journal article" date="2002" name="Genome Biol.">
        <title>Annotation of the Drosophila melanogaster euchromatic genome: a systematic review.</title>
        <authorList>
            <person name="Misra S."/>
            <person name="Crosby M.A."/>
            <person name="Mungall C.J."/>
            <person name="Matthews B.B."/>
            <person name="Campbell K.S."/>
            <person name="Hradecky P."/>
            <person name="Huang Y."/>
            <person name="Kaminker J.S."/>
            <person name="Millburn G.H."/>
            <person name="Prochnik S.E."/>
            <person name="Smith C.D."/>
            <person name="Tupy J.L."/>
            <person name="Whitfield E.J."/>
            <person name="Bayraktaroglu L."/>
            <person name="Berman B.P."/>
            <person name="Bettencourt B.R."/>
            <person name="Celniker S.E."/>
            <person name="de Grey A.D.N.J."/>
            <person name="Drysdale R.A."/>
            <person name="Harris N.L."/>
            <person name="Richter J."/>
            <person name="Russo S."/>
            <person name="Schroeder A.J."/>
            <person name="Shu S.Q."/>
            <person name="Stapleton M."/>
            <person name="Yamada C."/>
            <person name="Ashburner M."/>
            <person name="Gelbart W.M."/>
            <person name="Rubin G.M."/>
            <person name="Lewis S.E."/>
        </authorList>
    </citation>
    <scope>GENOME REANNOTATION</scope>
    <source>
        <strain>Berkeley</strain>
    </source>
</reference>
<reference key="5">
    <citation type="journal article" date="2002" name="Genome Biol.">
        <title>A Drosophila full-length cDNA resource.</title>
        <authorList>
            <person name="Stapleton M."/>
            <person name="Carlson J.W."/>
            <person name="Brokstein P."/>
            <person name="Yu C."/>
            <person name="Champe M."/>
            <person name="George R.A."/>
            <person name="Guarin H."/>
            <person name="Kronmiller B."/>
            <person name="Pacleb J.M."/>
            <person name="Park S."/>
            <person name="Wan K.H."/>
            <person name="Rubin G.M."/>
            <person name="Celniker S.E."/>
        </authorList>
    </citation>
    <scope>NUCLEOTIDE SEQUENCE [LARGE SCALE MRNA]</scope>
    <source>
        <strain>Berkeley</strain>
        <tissue>Testis</tissue>
    </source>
</reference>
<dbReference type="EMBL" id="AF022891">
    <property type="protein sequence ID" value="AAB81830.1"/>
    <property type="molecule type" value="mRNA"/>
</dbReference>
<dbReference type="EMBL" id="AF179361">
    <property type="protein sequence ID" value="AAD55779.1"/>
    <property type="molecule type" value="Genomic_DNA"/>
</dbReference>
<dbReference type="EMBL" id="AE014134">
    <property type="protein sequence ID" value="AAF52671.1"/>
    <property type="molecule type" value="Genomic_DNA"/>
</dbReference>
<dbReference type="EMBL" id="AY113208">
    <property type="protein sequence ID" value="AAM29213.1"/>
    <property type="molecule type" value="mRNA"/>
</dbReference>
<dbReference type="RefSeq" id="NP_001260250.1">
    <property type="nucleotide sequence ID" value="NM_001273321.1"/>
</dbReference>
<dbReference type="RefSeq" id="NP_477500.1">
    <property type="nucleotide sequence ID" value="NM_058152.3"/>
</dbReference>
<dbReference type="SMR" id="O16868"/>
<dbReference type="BioGRID" id="60289">
    <property type="interactions" value="11"/>
</dbReference>
<dbReference type="FunCoup" id="O16868">
    <property type="interactions" value="558"/>
</dbReference>
<dbReference type="IntAct" id="O16868">
    <property type="interactions" value="2"/>
</dbReference>
<dbReference type="STRING" id="7227.FBpp0079317"/>
<dbReference type="PaxDb" id="7227-FBpp0079317"/>
<dbReference type="DNASU" id="34166"/>
<dbReference type="EnsemblMetazoa" id="FBtr0079712">
    <property type="protein sequence ID" value="FBpp0079317"/>
    <property type="gene ID" value="FBgn0001084"/>
</dbReference>
<dbReference type="EnsemblMetazoa" id="FBtr0331992">
    <property type="protein sequence ID" value="FBpp0304314"/>
    <property type="gene ID" value="FBgn0001084"/>
</dbReference>
<dbReference type="GeneID" id="34166"/>
<dbReference type="KEGG" id="dme:Dmel_CG13396"/>
<dbReference type="UCSC" id="CG13396-RA">
    <property type="organism name" value="d. melanogaster"/>
</dbReference>
<dbReference type="AGR" id="FB:FBgn0001084"/>
<dbReference type="CTD" id="34166"/>
<dbReference type="FlyBase" id="FBgn0001084">
    <property type="gene designation" value="fy"/>
</dbReference>
<dbReference type="VEuPathDB" id="VectorBase:FBgn0001084"/>
<dbReference type="eggNOG" id="ENOG502QVMY">
    <property type="taxonomic scope" value="Eukaryota"/>
</dbReference>
<dbReference type="GeneTree" id="ENSGT00390000010727"/>
<dbReference type="HOGENOM" id="CLU_041212_1_0_1"/>
<dbReference type="InParanoid" id="O16868"/>
<dbReference type="OMA" id="LDQYSCS"/>
<dbReference type="OrthoDB" id="74835at2759"/>
<dbReference type="PhylomeDB" id="O16868"/>
<dbReference type="Reactome" id="R-DME-450728">
    <property type="pathway name" value="Inhibition of actin polymerization"/>
</dbReference>
<dbReference type="Reactome" id="R-DME-5610787">
    <property type="pathway name" value="Hedgehog 'off' state"/>
</dbReference>
<dbReference type="BioGRID-ORCS" id="34166">
    <property type="hits" value="0 hits in 1 CRISPR screen"/>
</dbReference>
<dbReference type="ChiTaRS" id="fy">
    <property type="organism name" value="fly"/>
</dbReference>
<dbReference type="GenomeRNAi" id="34166"/>
<dbReference type="PRO" id="PR:O16868"/>
<dbReference type="Proteomes" id="UP000000803">
    <property type="component" value="Chromosome 2L"/>
</dbReference>
<dbReference type="Bgee" id="FBgn0001084">
    <property type="expression patterns" value="Expressed in wing disc and 28 other cell types or tissues"/>
</dbReference>
<dbReference type="ExpressionAtlas" id="O16868">
    <property type="expression patterns" value="baseline and differential"/>
</dbReference>
<dbReference type="GO" id="GO:0005737">
    <property type="term" value="C:cytoplasm"/>
    <property type="evidence" value="ECO:0007669"/>
    <property type="project" value="UniProtKB-SubCell"/>
</dbReference>
<dbReference type="GO" id="GO:0005856">
    <property type="term" value="C:cytoskeleton"/>
    <property type="evidence" value="ECO:0007669"/>
    <property type="project" value="UniProtKB-SubCell"/>
</dbReference>
<dbReference type="GO" id="GO:0005886">
    <property type="term" value="C:plasma membrane"/>
    <property type="evidence" value="ECO:0000304"/>
    <property type="project" value="Reactome"/>
</dbReference>
<dbReference type="GO" id="GO:0007163">
    <property type="term" value="P:establishment or maintenance of cell polarity"/>
    <property type="evidence" value="ECO:0000315"/>
    <property type="project" value="FlyBase"/>
</dbReference>
<dbReference type="GO" id="GO:1905515">
    <property type="term" value="P:non-motile cilium assembly"/>
    <property type="evidence" value="ECO:0000318"/>
    <property type="project" value="GO_Central"/>
</dbReference>
<dbReference type="GO" id="GO:0016192">
    <property type="term" value="P:vesicle-mediated transport"/>
    <property type="evidence" value="ECO:0007669"/>
    <property type="project" value="InterPro"/>
</dbReference>
<dbReference type="CDD" id="cd21091">
    <property type="entry name" value="Fuzzy"/>
    <property type="match status" value="1"/>
</dbReference>
<dbReference type="InterPro" id="IPR043972">
    <property type="entry name" value="FUZ/MON1/HPS1_longin_1"/>
</dbReference>
<dbReference type="InterPro" id="IPR043971">
    <property type="entry name" value="FUZ/MON1/HPS1_longin_2"/>
</dbReference>
<dbReference type="InterPro" id="IPR043970">
    <property type="entry name" value="FUZ/MON1/HPS1_longin_3"/>
</dbReference>
<dbReference type="InterPro" id="IPR026069">
    <property type="entry name" value="Fuzzy"/>
</dbReference>
<dbReference type="PANTHER" id="PTHR13559">
    <property type="entry name" value="INTRACELLULAR TRAFFIC PROTEIN-RELATED"/>
    <property type="match status" value="1"/>
</dbReference>
<dbReference type="PANTHER" id="PTHR13559:SF1">
    <property type="entry name" value="PROTEIN FUZZY HOMOLOG"/>
    <property type="match status" value="1"/>
</dbReference>
<dbReference type="Pfam" id="PF19036">
    <property type="entry name" value="Fuz_longin_1"/>
    <property type="match status" value="1"/>
</dbReference>
<dbReference type="Pfam" id="PF19037">
    <property type="entry name" value="Fuz_longin_2"/>
    <property type="match status" value="1"/>
</dbReference>
<dbReference type="Pfam" id="PF19038">
    <property type="entry name" value="Fuz_longin_3"/>
    <property type="match status" value="1"/>
</dbReference>
<sequence>MSIYLLCLTTNGGLPVFTRKKGECENLPFSTVASLNGFHMFFKSLGIQLEATTTSKQQPIQNQAPADAEEWTYIWRDRESITLIVCGCGVGSEQLLQTLADLVFGAIGMFITRAAEMAHATLLDRLKKDAKKYVPIVDAILEAACAGTQLLGYTDCLLAAENAQLLQCLNEFSGHCGSLFCCLVVGHRIAVATEGWWDLDTRDRELLLFLLNSSSTMQHDVPVYLPVKSPHIAYRFVSIPVASNSALCVLCGAENASFRELHAHAMSAYRNEGNLLAAAERCVPRSLPEHLEIDGNVLAIILINRHTRKSLFTRNLNQSASVKRIIVGDLQRLDILKKFFDQTMDAVHQFETQSSSNKTTLVDQYSCSDYHKCYAHMDELGNVIFLLFVAAVPSHAMRFLAQRIHANILQEKSVCW</sequence>
<accession>O16868</accession>
<gene>
    <name type="primary">fuz</name>
    <name type="synonym">fuzzy</name>
    <name type="synonym">fy</name>
    <name type="ORF">CG13396</name>
</gene>
<name>FUZZY_DROME</name>
<keyword id="KW-0963">Cytoplasm</keyword>
<keyword id="KW-0206">Cytoskeleton</keyword>
<keyword id="KW-1185">Reference proteome</keyword>
<organism>
    <name type="scientific">Drosophila melanogaster</name>
    <name type="common">Fruit fly</name>
    <dbReference type="NCBI Taxonomy" id="7227"/>
    <lineage>
        <taxon>Eukaryota</taxon>
        <taxon>Metazoa</taxon>
        <taxon>Ecdysozoa</taxon>
        <taxon>Arthropoda</taxon>
        <taxon>Hexapoda</taxon>
        <taxon>Insecta</taxon>
        <taxon>Pterygota</taxon>
        <taxon>Neoptera</taxon>
        <taxon>Endopterygota</taxon>
        <taxon>Diptera</taxon>
        <taxon>Brachycera</taxon>
        <taxon>Muscomorpha</taxon>
        <taxon>Ephydroidea</taxon>
        <taxon>Drosophilidae</taxon>
        <taxon>Drosophila</taxon>
        <taxon>Sophophora</taxon>
    </lineage>
</organism>
<proteinExistence type="evidence at protein level"/>
<protein>
    <recommendedName>
        <fullName>Protein fuzzy</fullName>
    </recommendedName>
</protein>
<comment type="function">
    <text evidence="1">Plays a role in the organization of cell polarity via a planar cell polarity (PCP) cascade. Involved in the development of the hairs on the wings. Specify the correct orientation of the hair by limiting the site of prehair initiation to the distal vertex of the wing cells. Controls wing cell hair number by maintaining the integrity of the cytoskeletal components that direct hair development.</text>
</comment>
<comment type="interaction">
    <interactant intactId="EBI-40202319">
        <id>O16868</id>
    </interactant>
    <interactant intactId="EBI-2890486">
        <id>Q9VPH0</id>
        <label>in</label>
    </interactant>
    <organismsDiffer>false</organismsDiffer>
    <experiments>6</experiments>
</comment>
<comment type="subcellular location">
    <subcellularLocation>
        <location evidence="2">Cytoplasm</location>
    </subcellularLocation>
    <subcellularLocation>
        <location evidence="2">Cytoplasm</location>
        <location evidence="2">Cytoskeleton</location>
    </subcellularLocation>
</comment>
<comment type="tissue specificity">
    <text evidence="1">Expressed in female, but not male.</text>
</comment>
<comment type="developmental stage">
    <text evidence="1">Expressed at low levels at all stages of development, with a peak of expression in the embryo and in the 2-day-old pupa. Detected in all wing cells of the 2-day-old pupa.</text>
</comment>
<comment type="similarity">
    <text evidence="2">Belongs to the fuzzy family.</text>
</comment>
<feature type="chain" id="PRO_0000312924" description="Protein fuzzy">
    <location>
        <begin position="1"/>
        <end position="416"/>
    </location>
</feature>
<evidence type="ECO:0000269" key="1">
    <source>
    </source>
</evidence>
<evidence type="ECO:0000305" key="2"/>